<accession>Q89AE6</accession>
<feature type="chain" id="PRO_0000133729" description="Large ribosomal subunit protein uL13">
    <location>
        <begin position="1"/>
        <end position="144"/>
    </location>
</feature>
<proteinExistence type="inferred from homology"/>
<keyword id="KW-1185">Reference proteome</keyword>
<keyword id="KW-0687">Ribonucleoprotein</keyword>
<keyword id="KW-0689">Ribosomal protein</keyword>
<dbReference type="EMBL" id="AE016826">
    <property type="protein sequence ID" value="AAO27073.1"/>
    <property type="molecule type" value="Genomic_DNA"/>
</dbReference>
<dbReference type="SMR" id="Q89AE6"/>
<dbReference type="STRING" id="224915.bbp_354"/>
<dbReference type="KEGG" id="bab:bbp_354"/>
<dbReference type="eggNOG" id="COG0102">
    <property type="taxonomic scope" value="Bacteria"/>
</dbReference>
<dbReference type="HOGENOM" id="CLU_082184_2_2_6"/>
<dbReference type="OrthoDB" id="9801330at2"/>
<dbReference type="Proteomes" id="UP000000601">
    <property type="component" value="Chromosome"/>
</dbReference>
<dbReference type="GO" id="GO:0022625">
    <property type="term" value="C:cytosolic large ribosomal subunit"/>
    <property type="evidence" value="ECO:0007669"/>
    <property type="project" value="TreeGrafter"/>
</dbReference>
<dbReference type="GO" id="GO:0003729">
    <property type="term" value="F:mRNA binding"/>
    <property type="evidence" value="ECO:0007669"/>
    <property type="project" value="TreeGrafter"/>
</dbReference>
<dbReference type="GO" id="GO:0003735">
    <property type="term" value="F:structural constituent of ribosome"/>
    <property type="evidence" value="ECO:0007669"/>
    <property type="project" value="InterPro"/>
</dbReference>
<dbReference type="GO" id="GO:0017148">
    <property type="term" value="P:negative regulation of translation"/>
    <property type="evidence" value="ECO:0007669"/>
    <property type="project" value="TreeGrafter"/>
</dbReference>
<dbReference type="GO" id="GO:0006412">
    <property type="term" value="P:translation"/>
    <property type="evidence" value="ECO:0007669"/>
    <property type="project" value="UniProtKB-UniRule"/>
</dbReference>
<dbReference type="CDD" id="cd00392">
    <property type="entry name" value="Ribosomal_L13"/>
    <property type="match status" value="1"/>
</dbReference>
<dbReference type="FunFam" id="3.90.1180.10:FF:000001">
    <property type="entry name" value="50S ribosomal protein L13"/>
    <property type="match status" value="1"/>
</dbReference>
<dbReference type="Gene3D" id="3.90.1180.10">
    <property type="entry name" value="Ribosomal protein L13"/>
    <property type="match status" value="1"/>
</dbReference>
<dbReference type="HAMAP" id="MF_01366">
    <property type="entry name" value="Ribosomal_uL13"/>
    <property type="match status" value="1"/>
</dbReference>
<dbReference type="InterPro" id="IPR005822">
    <property type="entry name" value="Ribosomal_uL13"/>
</dbReference>
<dbReference type="InterPro" id="IPR005823">
    <property type="entry name" value="Ribosomal_uL13_bac-type"/>
</dbReference>
<dbReference type="InterPro" id="IPR023563">
    <property type="entry name" value="Ribosomal_uL13_CS"/>
</dbReference>
<dbReference type="InterPro" id="IPR036899">
    <property type="entry name" value="Ribosomal_uL13_sf"/>
</dbReference>
<dbReference type="NCBIfam" id="TIGR01066">
    <property type="entry name" value="rplM_bact"/>
    <property type="match status" value="1"/>
</dbReference>
<dbReference type="PANTHER" id="PTHR11545:SF2">
    <property type="entry name" value="LARGE RIBOSOMAL SUBUNIT PROTEIN UL13M"/>
    <property type="match status" value="1"/>
</dbReference>
<dbReference type="PANTHER" id="PTHR11545">
    <property type="entry name" value="RIBOSOMAL PROTEIN L13"/>
    <property type="match status" value="1"/>
</dbReference>
<dbReference type="Pfam" id="PF00572">
    <property type="entry name" value="Ribosomal_L13"/>
    <property type="match status" value="1"/>
</dbReference>
<dbReference type="PIRSF" id="PIRSF002181">
    <property type="entry name" value="Ribosomal_L13"/>
    <property type="match status" value="1"/>
</dbReference>
<dbReference type="SUPFAM" id="SSF52161">
    <property type="entry name" value="Ribosomal protein L13"/>
    <property type="match status" value="1"/>
</dbReference>
<dbReference type="PROSITE" id="PS00783">
    <property type="entry name" value="RIBOSOMAL_L13"/>
    <property type="match status" value="1"/>
</dbReference>
<reference key="1">
    <citation type="journal article" date="2003" name="Proc. Natl. Acad. Sci. U.S.A.">
        <title>Reductive genome evolution in Buchnera aphidicola.</title>
        <authorList>
            <person name="van Ham R.C.H.J."/>
            <person name="Kamerbeek J."/>
            <person name="Palacios C."/>
            <person name="Rausell C."/>
            <person name="Abascal F."/>
            <person name="Bastolla U."/>
            <person name="Fernandez J.M."/>
            <person name="Jimenez L."/>
            <person name="Postigo M."/>
            <person name="Silva F.J."/>
            <person name="Tamames J."/>
            <person name="Viguera E."/>
            <person name="Latorre A."/>
            <person name="Valencia A."/>
            <person name="Moran F."/>
            <person name="Moya A."/>
        </authorList>
    </citation>
    <scope>NUCLEOTIDE SEQUENCE [LARGE SCALE GENOMIC DNA]</scope>
    <source>
        <strain>Bp</strain>
    </source>
</reference>
<sequence length="144" mass="16527">MYIKSFSAKSNDFKKMWYCIDATGKILGRLATNIASRLRGKHKVEYTPHVDIGDYLIVINAKNIKVTGKKCTDKFYYHHTGYVGGLKKIAFKDMLHRYPERIIEIAVRGMLPKGPLGRSMFKKLKVYANDNHNHSAQNPKILNI</sequence>
<organism>
    <name type="scientific">Buchnera aphidicola subsp. Baizongia pistaciae (strain Bp)</name>
    <dbReference type="NCBI Taxonomy" id="224915"/>
    <lineage>
        <taxon>Bacteria</taxon>
        <taxon>Pseudomonadati</taxon>
        <taxon>Pseudomonadota</taxon>
        <taxon>Gammaproteobacteria</taxon>
        <taxon>Enterobacterales</taxon>
        <taxon>Erwiniaceae</taxon>
        <taxon>Buchnera</taxon>
    </lineage>
</organism>
<protein>
    <recommendedName>
        <fullName evidence="1">Large ribosomal subunit protein uL13</fullName>
    </recommendedName>
    <alternativeName>
        <fullName evidence="2">50S ribosomal protein L13</fullName>
    </alternativeName>
</protein>
<name>RL13_BUCBP</name>
<evidence type="ECO:0000255" key="1">
    <source>
        <dbReference type="HAMAP-Rule" id="MF_01366"/>
    </source>
</evidence>
<evidence type="ECO:0000305" key="2"/>
<comment type="function">
    <text evidence="1">This protein is one of the early assembly proteins of the 50S ribosomal subunit, although it is not seen to bind rRNA by itself. It is important during the early stages of 50S assembly.</text>
</comment>
<comment type="subunit">
    <text evidence="1">Part of the 50S ribosomal subunit.</text>
</comment>
<comment type="similarity">
    <text evidence="1">Belongs to the universal ribosomal protein uL13 family.</text>
</comment>
<gene>
    <name evidence="1" type="primary">rplM</name>
    <name type="ordered locus">bbp_354</name>
</gene>